<organism>
    <name type="scientific">Shigella boydii serotype 18 (strain CDC 3083-94 / BS512)</name>
    <dbReference type="NCBI Taxonomy" id="344609"/>
    <lineage>
        <taxon>Bacteria</taxon>
        <taxon>Pseudomonadati</taxon>
        <taxon>Pseudomonadota</taxon>
        <taxon>Gammaproteobacteria</taxon>
        <taxon>Enterobacterales</taxon>
        <taxon>Enterobacteriaceae</taxon>
        <taxon>Shigella</taxon>
    </lineage>
</organism>
<accession>B2U2U7</accession>
<protein>
    <recommendedName>
        <fullName evidence="2">Elongation factor G</fullName>
        <shortName evidence="2">EF-G</shortName>
    </recommendedName>
</protein>
<sequence>MARTTPIARYRNIGISAHIDAGKTTTTERILFYTGVNHKIGEVHDGAATMDWMEQEQERGITITSAATTAFWSGMAKQYEPHRINIIDTPGHVDFTIEVERSMRVLDGAVMVYCAVGGVQPQSETVWRQANKYKVPRIAFVNKMDRMGANFLKVVNQIKTRLGANPVPLQLAIGAEEHFTGVVDLVKMKAINWNDADQGVTFEYEDIPADMVELANEWHQNLIESAAEASEELMEKYLGGEELTEAEIKGALRQRVLNNEIILVTCGSAFKNKGVQAMLDAVIDYLPSPVDVPAINGILDDGKDTPAERHASDDEPFSALAFKIATDPFVGNLTFFRVYSGVVNSGDTVLNSVKAARERFGRIVQMHANKREEIKEVRAGDIAAAIGLKDVTTGDTLCDPDAPIILERMEFPEPVISIAVEPKTKADQEKMGLALGRLAKEDPSFRVWTDEESNQTIIAGMGELHLDIIVDRMKREFNVEANVGKPQVAYRETIRQKVTDVEGKHAKQSGGRGQYGHVVIDMYPLEPGSNPKGYEFINDIKGGVIPGEYIPAVDKGIQEQLKAGPLAGYPVVDMGIRLHFGSYHDVDSSELAFKLAASIAFKEGFKKAKPVLLEPIMKVEVETPEENTGDVIGDLSRRRGMLKGQESEVTGVKIHAEVPLSEMFGYATQLRSLTKGRASYTMEFLKYDEAPSNVAQAVIEARGK</sequence>
<evidence type="ECO:0000250" key="1"/>
<evidence type="ECO:0000255" key="2">
    <source>
        <dbReference type="HAMAP-Rule" id="MF_00054"/>
    </source>
</evidence>
<name>EFG_SHIB3</name>
<comment type="function">
    <text evidence="2">Catalyzes the GTP-dependent ribosomal translocation step during translation elongation. During this step, the ribosome changes from the pre-translocational (PRE) to the post-translocational (POST) state as the newly formed A-site-bound peptidyl-tRNA and P-site-bound deacylated tRNA move to the P and E sites, respectively. Catalyzes the coordinated movement of the two tRNA molecules, the mRNA and conformational changes in the ribosome.</text>
</comment>
<comment type="subcellular location">
    <subcellularLocation>
        <location evidence="2">Cytoplasm</location>
    </subcellularLocation>
</comment>
<comment type="similarity">
    <text evidence="2">Belongs to the TRAFAC class translation factor GTPase superfamily. Classic translation factor GTPase family. EF-G/EF-2 subfamily.</text>
</comment>
<feature type="chain" id="PRO_1000091762" description="Elongation factor G">
    <location>
        <begin position="1"/>
        <end position="704"/>
    </location>
</feature>
<feature type="domain" description="tr-type G">
    <location>
        <begin position="8"/>
        <end position="290"/>
    </location>
</feature>
<feature type="binding site" evidence="2">
    <location>
        <begin position="17"/>
        <end position="24"/>
    </location>
    <ligand>
        <name>GTP</name>
        <dbReference type="ChEBI" id="CHEBI:37565"/>
    </ligand>
</feature>
<feature type="binding site" evidence="2">
    <location>
        <begin position="88"/>
        <end position="92"/>
    </location>
    <ligand>
        <name>GTP</name>
        <dbReference type="ChEBI" id="CHEBI:37565"/>
    </ligand>
</feature>
<feature type="binding site" evidence="2">
    <location>
        <begin position="142"/>
        <end position="145"/>
    </location>
    <ligand>
        <name>GTP</name>
        <dbReference type="ChEBI" id="CHEBI:37565"/>
    </ligand>
</feature>
<feature type="modified residue" description="N6-acetyllysine" evidence="1">
    <location>
        <position position="504"/>
    </location>
</feature>
<feature type="modified residue" description="N6-acetyllysine" evidence="1">
    <location>
        <position position="643"/>
    </location>
</feature>
<proteinExistence type="inferred from homology"/>
<keyword id="KW-0007">Acetylation</keyword>
<keyword id="KW-0963">Cytoplasm</keyword>
<keyword id="KW-0251">Elongation factor</keyword>
<keyword id="KW-0342">GTP-binding</keyword>
<keyword id="KW-0547">Nucleotide-binding</keyword>
<keyword id="KW-0648">Protein biosynthesis</keyword>
<keyword id="KW-1185">Reference proteome</keyword>
<gene>
    <name evidence="2" type="primary">fusA</name>
    <name type="ordered locus">SbBS512_E3714</name>
</gene>
<dbReference type="EMBL" id="CP001063">
    <property type="protein sequence ID" value="ACD08326.1"/>
    <property type="molecule type" value="Genomic_DNA"/>
</dbReference>
<dbReference type="RefSeq" id="WP_000124700.1">
    <property type="nucleotide sequence ID" value="NC_010658.1"/>
</dbReference>
<dbReference type="SMR" id="B2U2U7"/>
<dbReference type="STRING" id="344609.SbBS512_E3714"/>
<dbReference type="GeneID" id="93778658"/>
<dbReference type="KEGG" id="sbc:SbBS512_E3714"/>
<dbReference type="HOGENOM" id="CLU_002794_4_1_6"/>
<dbReference type="Proteomes" id="UP000001030">
    <property type="component" value="Chromosome"/>
</dbReference>
<dbReference type="GO" id="GO:0005737">
    <property type="term" value="C:cytoplasm"/>
    <property type="evidence" value="ECO:0007669"/>
    <property type="project" value="UniProtKB-SubCell"/>
</dbReference>
<dbReference type="GO" id="GO:0005525">
    <property type="term" value="F:GTP binding"/>
    <property type="evidence" value="ECO:0007669"/>
    <property type="project" value="UniProtKB-UniRule"/>
</dbReference>
<dbReference type="GO" id="GO:0003924">
    <property type="term" value="F:GTPase activity"/>
    <property type="evidence" value="ECO:0007669"/>
    <property type="project" value="InterPro"/>
</dbReference>
<dbReference type="GO" id="GO:0097216">
    <property type="term" value="F:guanosine tetraphosphate binding"/>
    <property type="evidence" value="ECO:0007669"/>
    <property type="project" value="UniProtKB-ARBA"/>
</dbReference>
<dbReference type="GO" id="GO:0003746">
    <property type="term" value="F:translation elongation factor activity"/>
    <property type="evidence" value="ECO:0007669"/>
    <property type="project" value="UniProtKB-UniRule"/>
</dbReference>
<dbReference type="GO" id="GO:0032790">
    <property type="term" value="P:ribosome disassembly"/>
    <property type="evidence" value="ECO:0007669"/>
    <property type="project" value="TreeGrafter"/>
</dbReference>
<dbReference type="CDD" id="cd01886">
    <property type="entry name" value="EF-G"/>
    <property type="match status" value="1"/>
</dbReference>
<dbReference type="CDD" id="cd16262">
    <property type="entry name" value="EFG_III"/>
    <property type="match status" value="1"/>
</dbReference>
<dbReference type="CDD" id="cd01434">
    <property type="entry name" value="EFG_mtEFG1_IV"/>
    <property type="match status" value="1"/>
</dbReference>
<dbReference type="CDD" id="cd03713">
    <property type="entry name" value="EFG_mtEFG_C"/>
    <property type="match status" value="1"/>
</dbReference>
<dbReference type="CDD" id="cd04088">
    <property type="entry name" value="EFG_mtEFG_II"/>
    <property type="match status" value="1"/>
</dbReference>
<dbReference type="FunFam" id="2.40.30.10:FF:000006">
    <property type="entry name" value="Elongation factor G"/>
    <property type="match status" value="1"/>
</dbReference>
<dbReference type="FunFam" id="3.30.230.10:FF:000003">
    <property type="entry name" value="Elongation factor G"/>
    <property type="match status" value="1"/>
</dbReference>
<dbReference type="FunFam" id="3.30.70.240:FF:000001">
    <property type="entry name" value="Elongation factor G"/>
    <property type="match status" value="1"/>
</dbReference>
<dbReference type="FunFam" id="3.30.70.870:FF:000001">
    <property type="entry name" value="Elongation factor G"/>
    <property type="match status" value="1"/>
</dbReference>
<dbReference type="FunFam" id="3.40.50.300:FF:000029">
    <property type="entry name" value="Elongation factor G"/>
    <property type="match status" value="1"/>
</dbReference>
<dbReference type="Gene3D" id="3.30.230.10">
    <property type="match status" value="1"/>
</dbReference>
<dbReference type="Gene3D" id="3.30.70.240">
    <property type="match status" value="1"/>
</dbReference>
<dbReference type="Gene3D" id="3.30.70.870">
    <property type="entry name" value="Elongation Factor G (Translational Gtpase), domain 3"/>
    <property type="match status" value="1"/>
</dbReference>
<dbReference type="Gene3D" id="3.40.50.300">
    <property type="entry name" value="P-loop containing nucleotide triphosphate hydrolases"/>
    <property type="match status" value="1"/>
</dbReference>
<dbReference type="Gene3D" id="2.40.30.10">
    <property type="entry name" value="Translation factors"/>
    <property type="match status" value="1"/>
</dbReference>
<dbReference type="HAMAP" id="MF_00054_B">
    <property type="entry name" value="EF_G_EF_2_B"/>
    <property type="match status" value="1"/>
</dbReference>
<dbReference type="InterPro" id="IPR041095">
    <property type="entry name" value="EFG_II"/>
</dbReference>
<dbReference type="InterPro" id="IPR009022">
    <property type="entry name" value="EFG_III"/>
</dbReference>
<dbReference type="InterPro" id="IPR035647">
    <property type="entry name" value="EFG_III/V"/>
</dbReference>
<dbReference type="InterPro" id="IPR047872">
    <property type="entry name" value="EFG_IV"/>
</dbReference>
<dbReference type="InterPro" id="IPR035649">
    <property type="entry name" value="EFG_V"/>
</dbReference>
<dbReference type="InterPro" id="IPR000640">
    <property type="entry name" value="EFG_V-like"/>
</dbReference>
<dbReference type="InterPro" id="IPR004161">
    <property type="entry name" value="EFTu-like_2"/>
</dbReference>
<dbReference type="InterPro" id="IPR031157">
    <property type="entry name" value="G_TR_CS"/>
</dbReference>
<dbReference type="InterPro" id="IPR027417">
    <property type="entry name" value="P-loop_NTPase"/>
</dbReference>
<dbReference type="InterPro" id="IPR020568">
    <property type="entry name" value="Ribosomal_Su5_D2-typ_SF"/>
</dbReference>
<dbReference type="InterPro" id="IPR014721">
    <property type="entry name" value="Ribsml_uS5_D2-typ_fold_subgr"/>
</dbReference>
<dbReference type="InterPro" id="IPR005225">
    <property type="entry name" value="Small_GTP-bd"/>
</dbReference>
<dbReference type="InterPro" id="IPR000795">
    <property type="entry name" value="T_Tr_GTP-bd_dom"/>
</dbReference>
<dbReference type="InterPro" id="IPR009000">
    <property type="entry name" value="Transl_B-barrel_sf"/>
</dbReference>
<dbReference type="InterPro" id="IPR004540">
    <property type="entry name" value="Transl_elong_EFG/EF2"/>
</dbReference>
<dbReference type="InterPro" id="IPR005517">
    <property type="entry name" value="Transl_elong_EFG/EF2_IV"/>
</dbReference>
<dbReference type="NCBIfam" id="TIGR00484">
    <property type="entry name" value="EF-G"/>
    <property type="match status" value="1"/>
</dbReference>
<dbReference type="NCBIfam" id="NF009381">
    <property type="entry name" value="PRK12740.1-5"/>
    <property type="match status" value="1"/>
</dbReference>
<dbReference type="NCBIfam" id="TIGR00231">
    <property type="entry name" value="small_GTP"/>
    <property type="match status" value="1"/>
</dbReference>
<dbReference type="PANTHER" id="PTHR43261:SF1">
    <property type="entry name" value="RIBOSOME-RELEASING FACTOR 2, MITOCHONDRIAL"/>
    <property type="match status" value="1"/>
</dbReference>
<dbReference type="PANTHER" id="PTHR43261">
    <property type="entry name" value="TRANSLATION ELONGATION FACTOR G-RELATED"/>
    <property type="match status" value="1"/>
</dbReference>
<dbReference type="Pfam" id="PF00679">
    <property type="entry name" value="EFG_C"/>
    <property type="match status" value="1"/>
</dbReference>
<dbReference type="Pfam" id="PF14492">
    <property type="entry name" value="EFG_III"/>
    <property type="match status" value="1"/>
</dbReference>
<dbReference type="Pfam" id="PF03764">
    <property type="entry name" value="EFG_IV"/>
    <property type="match status" value="1"/>
</dbReference>
<dbReference type="Pfam" id="PF00009">
    <property type="entry name" value="GTP_EFTU"/>
    <property type="match status" value="1"/>
</dbReference>
<dbReference type="Pfam" id="PF03144">
    <property type="entry name" value="GTP_EFTU_D2"/>
    <property type="match status" value="1"/>
</dbReference>
<dbReference type="PRINTS" id="PR00315">
    <property type="entry name" value="ELONGATNFCT"/>
</dbReference>
<dbReference type="SMART" id="SM00838">
    <property type="entry name" value="EFG_C"/>
    <property type="match status" value="1"/>
</dbReference>
<dbReference type="SMART" id="SM00889">
    <property type="entry name" value="EFG_IV"/>
    <property type="match status" value="1"/>
</dbReference>
<dbReference type="SUPFAM" id="SSF54980">
    <property type="entry name" value="EF-G C-terminal domain-like"/>
    <property type="match status" value="2"/>
</dbReference>
<dbReference type="SUPFAM" id="SSF52540">
    <property type="entry name" value="P-loop containing nucleoside triphosphate hydrolases"/>
    <property type="match status" value="1"/>
</dbReference>
<dbReference type="SUPFAM" id="SSF54211">
    <property type="entry name" value="Ribosomal protein S5 domain 2-like"/>
    <property type="match status" value="1"/>
</dbReference>
<dbReference type="SUPFAM" id="SSF50447">
    <property type="entry name" value="Translation proteins"/>
    <property type="match status" value="1"/>
</dbReference>
<dbReference type="PROSITE" id="PS00301">
    <property type="entry name" value="G_TR_1"/>
    <property type="match status" value="1"/>
</dbReference>
<dbReference type="PROSITE" id="PS51722">
    <property type="entry name" value="G_TR_2"/>
    <property type="match status" value="1"/>
</dbReference>
<reference key="1">
    <citation type="submission" date="2008-05" db="EMBL/GenBank/DDBJ databases">
        <title>Complete sequence of Shigella boydii serotype 18 strain BS512.</title>
        <authorList>
            <person name="Rasko D.A."/>
            <person name="Rosovitz M."/>
            <person name="Maurelli A.T."/>
            <person name="Myers G."/>
            <person name="Seshadri R."/>
            <person name="Cer R."/>
            <person name="Jiang L."/>
            <person name="Ravel J."/>
            <person name="Sebastian Y."/>
        </authorList>
    </citation>
    <scope>NUCLEOTIDE SEQUENCE [LARGE SCALE GENOMIC DNA]</scope>
    <source>
        <strain>CDC 3083-94 / BS512</strain>
    </source>
</reference>